<reference key="1">
    <citation type="journal article" date="2004" name="Nucleic Acids Res.">
        <title>Rapid evolution of RNA editing sites in a small non-essential plastid gene.</title>
        <authorList>
            <person name="Fiebig A."/>
            <person name="Stegemann S."/>
            <person name="Bock R."/>
        </authorList>
    </citation>
    <scope>NUCLEOTIDE SEQUENCE [GENOMIC DNA]</scope>
    <scope>RNA EDITING</scope>
    <source>
        <tissue>Leaf</tissue>
    </source>
</reference>
<geneLocation type="chloroplast"/>
<keyword id="KW-0150">Chloroplast</keyword>
<keyword id="KW-0249">Electron transport</keyword>
<keyword id="KW-0472">Membrane</keyword>
<keyword id="KW-0602">Photosynthesis</keyword>
<keyword id="KW-0934">Plastid</keyword>
<keyword id="KW-0691">RNA editing</keyword>
<keyword id="KW-0793">Thylakoid</keyword>
<keyword id="KW-0812">Transmembrane</keyword>
<keyword id="KW-1133">Transmembrane helix</keyword>
<keyword id="KW-0813">Transport</keyword>
<organism>
    <name type="scientific">Magnolia stellata</name>
    <name type="common">Star magnolia</name>
    <name type="synonym">Buergeria stellata</name>
    <dbReference type="NCBI Taxonomy" id="54733"/>
    <lineage>
        <taxon>Eukaryota</taxon>
        <taxon>Viridiplantae</taxon>
        <taxon>Streptophyta</taxon>
        <taxon>Embryophyta</taxon>
        <taxon>Tracheophyta</taxon>
        <taxon>Spermatophyta</taxon>
        <taxon>Magnoliopsida</taxon>
        <taxon>Magnoliidae</taxon>
        <taxon>Magnoliales</taxon>
        <taxon>Magnoliaceae</taxon>
        <taxon>Magnolia</taxon>
    </lineage>
</organism>
<proteinExistence type="evidence at transcript level"/>
<protein>
    <recommendedName>
        <fullName evidence="1">Cytochrome b6-f complex subunit 6</fullName>
    </recommendedName>
    <alternativeName>
        <fullName evidence="1">Cytochrome b6-f complex subunit PetL</fullName>
    </alternativeName>
    <alternativeName>
        <fullName evidence="1">Cytochrome b6-f complex subunit VI</fullName>
    </alternativeName>
</protein>
<sequence>MLTITSYFGFLLAALTITSALLIGLSKIRLI</sequence>
<comment type="function">
    <text evidence="1">Component of the cytochrome b6-f complex, which mediates electron transfer between photosystem II (PSII) and photosystem I (PSI), cyclic electron flow around PSI, and state transitions. PetL is important for photoautotrophic growth as well as for electron transfer efficiency and stability of the cytochrome b6-f complex.</text>
</comment>
<comment type="subunit">
    <text evidence="1">The 4 large subunits of the cytochrome b6-f complex are cytochrome b6, subunit IV (17 kDa polypeptide, PetD), cytochrome f and the Rieske protein, while the 4 small subunits are PetG, PetL, PetM and PetN. The complex functions as a dimer.</text>
</comment>
<comment type="subcellular location">
    <subcellularLocation>
        <location evidence="1">Plastid</location>
        <location evidence="1">Chloroplast thylakoid membrane</location>
        <topology evidence="1">Single-pass membrane protein</topology>
    </subcellularLocation>
</comment>
<comment type="RNA editing">
    <location>
        <position position="2" evidence="2"/>
    </location>
    <location>
        <position position="15" evidence="2"/>
    </location>
    <location>
        <position position="19" evidence="2"/>
    </location>
</comment>
<comment type="similarity">
    <text evidence="1">Belongs to the PetL family.</text>
</comment>
<accession>Q5K3U3</accession>
<gene>
    <name evidence="1" type="primary">petL</name>
</gene>
<dbReference type="EMBL" id="AJ704421">
    <property type="protein sequence ID" value="CAG28633.1"/>
    <property type="molecule type" value="Genomic_DNA"/>
</dbReference>
<dbReference type="SMR" id="Q5K3U3"/>
<dbReference type="GO" id="GO:0009535">
    <property type="term" value="C:chloroplast thylakoid membrane"/>
    <property type="evidence" value="ECO:0007669"/>
    <property type="project" value="UniProtKB-SubCell"/>
</dbReference>
<dbReference type="GO" id="GO:0009512">
    <property type="term" value="C:cytochrome b6f complex"/>
    <property type="evidence" value="ECO:0007669"/>
    <property type="project" value="InterPro"/>
</dbReference>
<dbReference type="GO" id="GO:0045158">
    <property type="term" value="F:electron transporter, transferring electrons within cytochrome b6/f complex of photosystem II activity"/>
    <property type="evidence" value="ECO:0007669"/>
    <property type="project" value="UniProtKB-UniRule"/>
</dbReference>
<dbReference type="GO" id="GO:0015979">
    <property type="term" value="P:photosynthesis"/>
    <property type="evidence" value="ECO:0007669"/>
    <property type="project" value="UniProtKB-KW"/>
</dbReference>
<dbReference type="HAMAP" id="MF_00433">
    <property type="entry name" value="Cytb6_f_PetL"/>
    <property type="match status" value="1"/>
</dbReference>
<dbReference type="InterPro" id="IPR007802">
    <property type="entry name" value="Cyt_b6/f_cplx_su6"/>
</dbReference>
<dbReference type="PANTHER" id="PTHR37266">
    <property type="entry name" value="CYTOCHROME B6-F COMPLEX SUBUNIT 6"/>
    <property type="match status" value="1"/>
</dbReference>
<dbReference type="PANTHER" id="PTHR37266:SF1">
    <property type="entry name" value="CYTOCHROME B6-F COMPLEX SUBUNIT 6"/>
    <property type="match status" value="1"/>
</dbReference>
<dbReference type="Pfam" id="PF05115">
    <property type="entry name" value="PetL"/>
    <property type="match status" value="1"/>
</dbReference>
<dbReference type="SUPFAM" id="SSF103436">
    <property type="entry name" value="PetL subunit of the cytochrome b6f complex"/>
    <property type="match status" value="1"/>
</dbReference>
<name>PETL_MAGST</name>
<evidence type="ECO:0000255" key="1">
    <source>
        <dbReference type="HAMAP-Rule" id="MF_00433"/>
    </source>
</evidence>
<evidence type="ECO:0000269" key="2">
    <source>
    </source>
</evidence>
<feature type="chain" id="PRO_0000220455" description="Cytochrome b6-f complex subunit 6">
    <location>
        <begin position="1"/>
        <end position="31"/>
    </location>
</feature>
<feature type="transmembrane region" description="Helical" evidence="1">
    <location>
        <begin position="4"/>
        <end position="24"/>
    </location>
</feature>